<accession>B1JIH4</accession>
<protein>
    <recommendedName>
        <fullName evidence="1">Sigma factor-binding protein Crl</fullName>
    </recommendedName>
</protein>
<name>CRL_YERPY</name>
<reference key="1">
    <citation type="submission" date="2008-02" db="EMBL/GenBank/DDBJ databases">
        <title>Complete sequence of Yersinia pseudotuberculosis YPIII.</title>
        <authorList>
            <consortium name="US DOE Joint Genome Institute"/>
            <person name="Copeland A."/>
            <person name="Lucas S."/>
            <person name="Lapidus A."/>
            <person name="Glavina del Rio T."/>
            <person name="Dalin E."/>
            <person name="Tice H."/>
            <person name="Bruce D."/>
            <person name="Goodwin L."/>
            <person name="Pitluck S."/>
            <person name="Munk A.C."/>
            <person name="Brettin T."/>
            <person name="Detter J.C."/>
            <person name="Han C."/>
            <person name="Tapia R."/>
            <person name="Schmutz J."/>
            <person name="Larimer F."/>
            <person name="Land M."/>
            <person name="Hauser L."/>
            <person name="Challacombe J.F."/>
            <person name="Green L."/>
            <person name="Lindler L.E."/>
            <person name="Nikolich M.P."/>
            <person name="Richardson P."/>
        </authorList>
    </citation>
    <scope>NUCLEOTIDE SEQUENCE [LARGE SCALE GENOMIC DNA]</scope>
    <source>
        <strain>YPIII</strain>
    </source>
</reference>
<sequence length="133" mass="15386">MTLTSAHPKSKLMKRFAALGPYLREGQCQNDHFFFDCLAVCINVKLAPEKREFWGWWIELEPSAGRFTYVYQLGLFNKEGNWNAEKISDPEVQDKLESTLRSFHLRLEEMLASIDMKLEPAADFNDQPVKLSA</sequence>
<proteinExistence type="inferred from homology"/>
<dbReference type="EMBL" id="CP000950">
    <property type="protein sequence ID" value="ACA69558.1"/>
    <property type="molecule type" value="Genomic_DNA"/>
</dbReference>
<dbReference type="RefSeq" id="WP_002208702.1">
    <property type="nucleotide sequence ID" value="NZ_CP009792.1"/>
</dbReference>
<dbReference type="SMR" id="B1JIH4"/>
<dbReference type="GeneID" id="57975495"/>
<dbReference type="KEGG" id="ypy:YPK_3289"/>
<dbReference type="PATRIC" id="fig|502800.11.peg.4022"/>
<dbReference type="GO" id="GO:0005737">
    <property type="term" value="C:cytoplasm"/>
    <property type="evidence" value="ECO:0007669"/>
    <property type="project" value="UniProtKB-SubCell"/>
</dbReference>
<dbReference type="GO" id="GO:0045893">
    <property type="term" value="P:positive regulation of DNA-templated transcription"/>
    <property type="evidence" value="ECO:0007669"/>
    <property type="project" value="UniProtKB-UniRule"/>
</dbReference>
<dbReference type="Gene3D" id="3.30.310.230">
    <property type="entry name" value="Sigma factor-binding protein Crl monomer"/>
    <property type="match status" value="1"/>
</dbReference>
<dbReference type="HAMAP" id="MF_01178">
    <property type="entry name" value="Crl"/>
    <property type="match status" value="1"/>
</dbReference>
<dbReference type="InterPro" id="IPR009986">
    <property type="entry name" value="Tscrpt_reg_Crl"/>
</dbReference>
<dbReference type="InterPro" id="IPR038208">
    <property type="entry name" value="Tscrpt_reg_Crl_sf"/>
</dbReference>
<dbReference type="NCBIfam" id="NF008217">
    <property type="entry name" value="PRK10984.1"/>
    <property type="match status" value="1"/>
</dbReference>
<dbReference type="Pfam" id="PF07417">
    <property type="entry name" value="Crl"/>
    <property type="match status" value="1"/>
</dbReference>
<evidence type="ECO:0000255" key="1">
    <source>
        <dbReference type="HAMAP-Rule" id="MF_01178"/>
    </source>
</evidence>
<organism>
    <name type="scientific">Yersinia pseudotuberculosis serotype O:3 (strain YPIII)</name>
    <dbReference type="NCBI Taxonomy" id="502800"/>
    <lineage>
        <taxon>Bacteria</taxon>
        <taxon>Pseudomonadati</taxon>
        <taxon>Pseudomonadota</taxon>
        <taxon>Gammaproteobacteria</taxon>
        <taxon>Enterobacterales</taxon>
        <taxon>Yersiniaceae</taxon>
        <taxon>Yersinia</taxon>
    </lineage>
</organism>
<feature type="chain" id="PRO_1000138154" description="Sigma factor-binding protein Crl">
    <location>
        <begin position="1"/>
        <end position="133"/>
    </location>
</feature>
<feature type="region of interest" description="Essential for activity" evidence="1">
    <location>
        <begin position="99"/>
        <end position="122"/>
    </location>
</feature>
<gene>
    <name evidence="1" type="primary">crl</name>
    <name type="ordered locus">YPK_3289</name>
</gene>
<comment type="function">
    <text evidence="1">Binds to the sigma-S subunit of RNA polymerase, activating expression of sigma-S-regulated genes. Stimulates RNA polymerase holoenzyme formation and may bind to several other sigma factors, such as sigma-70 and sigma-32.</text>
</comment>
<comment type="subcellular location">
    <subcellularLocation>
        <location evidence="1">Cytoplasm</location>
    </subcellularLocation>
</comment>
<comment type="similarity">
    <text evidence="1">Belongs to the Crl family.</text>
</comment>
<keyword id="KW-0010">Activator</keyword>
<keyword id="KW-0963">Cytoplasm</keyword>
<keyword id="KW-0804">Transcription</keyword>
<keyword id="KW-0805">Transcription regulation</keyword>